<protein>
    <recommendedName>
        <fullName>Calcium/calmodulin-dependent protein kinase type 1G</fullName>
        <ecNumber>2.7.11.17</ecNumber>
    </recommendedName>
    <alternativeName>
        <fullName>CaM kinase I gamma</fullName>
        <shortName>CaM kinase IG</shortName>
        <shortName>CaM-KI gamma</shortName>
        <shortName>CaMKI gamma</shortName>
        <shortName>CaMKIG</shortName>
    </alternativeName>
    <alternativeName>
        <fullName>CaMK-like CREB kinase III</fullName>
        <shortName>CLICK III</shortName>
    </alternativeName>
</protein>
<keyword id="KW-0021">Allosteric enzyme</keyword>
<keyword id="KW-0067">ATP-binding</keyword>
<keyword id="KW-0112">Calmodulin-binding</keyword>
<keyword id="KW-1003">Cell membrane</keyword>
<keyword id="KW-0963">Cytoplasm</keyword>
<keyword id="KW-0333">Golgi apparatus</keyword>
<keyword id="KW-0418">Kinase</keyword>
<keyword id="KW-0449">Lipoprotein</keyword>
<keyword id="KW-0472">Membrane</keyword>
<keyword id="KW-0547">Nucleotide-binding</keyword>
<keyword id="KW-0636">Prenylation</keyword>
<keyword id="KW-1185">Reference proteome</keyword>
<keyword id="KW-0723">Serine/threonine-protein kinase</keyword>
<keyword id="KW-0808">Transferase</keyword>
<accession>Q91VB2</accession>
<dbReference type="EC" id="2.7.11.17"/>
<dbReference type="EMBL" id="AY212936">
    <property type="protein sequence ID" value="AAP29965.1"/>
    <property type="molecule type" value="mRNA"/>
</dbReference>
<dbReference type="EMBL" id="AF428262">
    <property type="protein sequence ID" value="AAL28101.1"/>
    <property type="molecule type" value="mRNA"/>
</dbReference>
<dbReference type="EMBL" id="BC021840">
    <property type="protein sequence ID" value="AAH21840.1"/>
    <property type="molecule type" value="mRNA"/>
</dbReference>
<dbReference type="CCDS" id="CCDS15638.1"/>
<dbReference type="RefSeq" id="NP_659066.1">
    <property type="nucleotide sequence ID" value="NM_144817.3"/>
</dbReference>
<dbReference type="SMR" id="Q91VB2"/>
<dbReference type="FunCoup" id="Q91VB2">
    <property type="interactions" value="869"/>
</dbReference>
<dbReference type="STRING" id="10090.ENSMUSP00000016323"/>
<dbReference type="iPTMnet" id="Q91VB2"/>
<dbReference type="PhosphoSitePlus" id="Q91VB2"/>
<dbReference type="SwissPalm" id="Q91VB2"/>
<dbReference type="PaxDb" id="10090-ENSMUSP00000016323"/>
<dbReference type="ProteomicsDB" id="263486"/>
<dbReference type="Antibodypedia" id="20698">
    <property type="antibodies" value="296 antibodies from 30 providers"/>
</dbReference>
<dbReference type="DNASU" id="215303"/>
<dbReference type="Ensembl" id="ENSMUST00000016323.11">
    <property type="protein sequence ID" value="ENSMUSP00000016323.5"/>
    <property type="gene ID" value="ENSMUSG00000016179.12"/>
</dbReference>
<dbReference type="GeneID" id="215303"/>
<dbReference type="KEGG" id="mmu:215303"/>
<dbReference type="UCSC" id="uc007eel.1">
    <property type="organism name" value="mouse"/>
</dbReference>
<dbReference type="AGR" id="MGI:2388073"/>
<dbReference type="CTD" id="57172"/>
<dbReference type="MGI" id="MGI:2388073">
    <property type="gene designation" value="Camk1g"/>
</dbReference>
<dbReference type="VEuPathDB" id="HostDB:ENSMUSG00000016179"/>
<dbReference type="eggNOG" id="KOG0032">
    <property type="taxonomic scope" value="Eukaryota"/>
</dbReference>
<dbReference type="GeneTree" id="ENSGT00940000156872"/>
<dbReference type="InParanoid" id="Q91VB2"/>
<dbReference type="OMA" id="YAWKKNT"/>
<dbReference type="OrthoDB" id="40902at2759"/>
<dbReference type="PhylomeDB" id="Q91VB2"/>
<dbReference type="TreeFam" id="TF314166"/>
<dbReference type="BRENDA" id="2.7.11.17">
    <property type="organism ID" value="3474"/>
</dbReference>
<dbReference type="BioGRID-ORCS" id="215303">
    <property type="hits" value="1 hit in 79 CRISPR screens"/>
</dbReference>
<dbReference type="PRO" id="PR:Q91VB2"/>
<dbReference type="Proteomes" id="UP000000589">
    <property type="component" value="Chromosome 1"/>
</dbReference>
<dbReference type="RNAct" id="Q91VB2">
    <property type="molecule type" value="protein"/>
</dbReference>
<dbReference type="Bgee" id="ENSMUSG00000016179">
    <property type="expression patterns" value="Expressed in ventromedial nucleus of hypothalamus and 149 other cell types or tissues"/>
</dbReference>
<dbReference type="ExpressionAtlas" id="Q91VB2">
    <property type="expression patterns" value="baseline and differential"/>
</dbReference>
<dbReference type="GO" id="GO:0005954">
    <property type="term" value="C:calcium- and calmodulin-dependent protein kinase complex"/>
    <property type="evidence" value="ECO:0000314"/>
    <property type="project" value="MGI"/>
</dbReference>
<dbReference type="GO" id="GO:0012505">
    <property type="term" value="C:endomembrane system"/>
    <property type="evidence" value="ECO:0000314"/>
    <property type="project" value="MGI"/>
</dbReference>
<dbReference type="GO" id="GO:0000139">
    <property type="term" value="C:Golgi membrane"/>
    <property type="evidence" value="ECO:0007669"/>
    <property type="project" value="UniProtKB-SubCell"/>
</dbReference>
<dbReference type="GO" id="GO:0005886">
    <property type="term" value="C:plasma membrane"/>
    <property type="evidence" value="ECO:0000314"/>
    <property type="project" value="MGI"/>
</dbReference>
<dbReference type="GO" id="GO:0005524">
    <property type="term" value="F:ATP binding"/>
    <property type="evidence" value="ECO:0007669"/>
    <property type="project" value="UniProtKB-KW"/>
</dbReference>
<dbReference type="GO" id="GO:0004683">
    <property type="term" value="F:calcium/calmodulin-dependent protein kinase activity"/>
    <property type="evidence" value="ECO:0000314"/>
    <property type="project" value="MGI"/>
</dbReference>
<dbReference type="GO" id="GO:0005516">
    <property type="term" value="F:calmodulin binding"/>
    <property type="evidence" value="ECO:0007669"/>
    <property type="project" value="UniProtKB-KW"/>
</dbReference>
<dbReference type="GO" id="GO:0106310">
    <property type="term" value="F:protein serine kinase activity"/>
    <property type="evidence" value="ECO:0007669"/>
    <property type="project" value="RHEA"/>
</dbReference>
<dbReference type="CDD" id="cd14166">
    <property type="entry name" value="STKc_CaMKI_gamma"/>
    <property type="match status" value="1"/>
</dbReference>
<dbReference type="FunFam" id="1.10.510.10:FF:000026">
    <property type="entry name" value="Calcium/calmodulin-dependent protein kinase type 1"/>
    <property type="match status" value="1"/>
</dbReference>
<dbReference type="FunFam" id="3.30.200.20:FF:000331">
    <property type="entry name" value="Calcium/calmodulin-dependent protein kinase type 1G"/>
    <property type="match status" value="1"/>
</dbReference>
<dbReference type="Gene3D" id="3.30.200.20">
    <property type="entry name" value="Phosphorylase Kinase, domain 1"/>
    <property type="match status" value="1"/>
</dbReference>
<dbReference type="Gene3D" id="1.10.510.10">
    <property type="entry name" value="Transferase(Phosphotransferase) domain 1"/>
    <property type="match status" value="1"/>
</dbReference>
<dbReference type="InterPro" id="IPR011009">
    <property type="entry name" value="Kinase-like_dom_sf"/>
</dbReference>
<dbReference type="InterPro" id="IPR000719">
    <property type="entry name" value="Prot_kinase_dom"/>
</dbReference>
<dbReference type="InterPro" id="IPR017441">
    <property type="entry name" value="Protein_kinase_ATP_BS"/>
</dbReference>
<dbReference type="InterPro" id="IPR008271">
    <property type="entry name" value="Ser/Thr_kinase_AS"/>
</dbReference>
<dbReference type="PANTHER" id="PTHR24347">
    <property type="entry name" value="SERINE/THREONINE-PROTEIN KINASE"/>
    <property type="match status" value="1"/>
</dbReference>
<dbReference type="Pfam" id="PF00069">
    <property type="entry name" value="Pkinase"/>
    <property type="match status" value="1"/>
</dbReference>
<dbReference type="SMART" id="SM00220">
    <property type="entry name" value="S_TKc"/>
    <property type="match status" value="1"/>
</dbReference>
<dbReference type="SUPFAM" id="SSF56112">
    <property type="entry name" value="Protein kinase-like (PK-like)"/>
    <property type="match status" value="1"/>
</dbReference>
<dbReference type="PROSITE" id="PS00107">
    <property type="entry name" value="PROTEIN_KINASE_ATP"/>
    <property type="match status" value="1"/>
</dbReference>
<dbReference type="PROSITE" id="PS50011">
    <property type="entry name" value="PROTEIN_KINASE_DOM"/>
    <property type="match status" value="1"/>
</dbReference>
<dbReference type="PROSITE" id="PS00108">
    <property type="entry name" value="PROTEIN_KINASE_ST"/>
    <property type="match status" value="1"/>
</dbReference>
<reference key="1">
    <citation type="journal article" date="2003" name="J. Biol. Chem.">
        <title>Molecular cloning and characterization of CLICK-III/CaMKIgamma, a novel membrane-anchored neuronal Ca2+/calmodulin-dependent protein kinase (CaMK).</title>
        <authorList>
            <person name="Takemoto-Kimura S."/>
            <person name="Terai H."/>
            <person name="Takamoto M."/>
            <person name="Ohmae S."/>
            <person name="Kikumura S."/>
            <person name="Segi E."/>
            <person name="Arakawa Y."/>
            <person name="Furuyashiki T."/>
            <person name="Narumiya S."/>
            <person name="Bito H."/>
        </authorList>
    </citation>
    <scope>NUCLEOTIDE SEQUENCE [MRNA]</scope>
    <scope>CATALYTIC ACTIVITY</scope>
    <scope>SUBCELLULAR LOCATION</scope>
    <scope>ACTIVITY REGULATION</scope>
    <scope>MUTAGENESIS OF CYS-474</scope>
    <scope>PHOSPHORYLATION BY CAMKK1</scope>
    <scope>PHOSPHORYLATION OF CREB1</scope>
    <scope>ISOPRENYLATION</scope>
    <scope>TISSUE SPECIFICITY</scope>
    <scope>DEVELOPMENTAL STAGE</scope>
</reference>
<reference key="2">
    <citation type="submission" date="2001-10" db="EMBL/GenBank/DDBJ databases">
        <authorList>
            <person name="Bjork B.C."/>
            <person name="Watanabe Y."/>
            <person name="Murray J.C."/>
            <person name="Schutte B.C."/>
        </authorList>
    </citation>
    <scope>NUCLEOTIDE SEQUENCE [MRNA]</scope>
    <source>
        <tissue>Retina</tissue>
    </source>
</reference>
<reference key="3">
    <citation type="journal article" date="2004" name="Genome Res.">
        <title>The status, quality, and expansion of the NIH full-length cDNA project: the Mammalian Gene Collection (MGC).</title>
        <authorList>
            <consortium name="The MGC Project Team"/>
        </authorList>
    </citation>
    <scope>NUCLEOTIDE SEQUENCE [LARGE SCALE MRNA]</scope>
    <source>
        <tissue>Eye</tissue>
    </source>
</reference>
<gene>
    <name type="primary">Camk1g</name>
</gene>
<sequence>MGRKEEEDCSSWKKQTTNIRKTFIFMEVLGSGAFSEVFLVKQRVTGKLFALKCIKKSPAFRDSSLENEIAVLKRIKHENIVTLEDIYESTTHYYLVMQLVSGGELFDRILERGVYTEKDASLVIQQVLSAVKYLHENGIVHRDLKPENLLYLTPEENSKIMITDFGLSKMEQNGVMSTACGTPGYVAPEVLAQKPYSKAVDCWSIGVITYILLCGYPPFYEETESKLFEKIKEGYYEFESPFWDDISESAKDFICHLLEKDPNERYTCEKALRHPWIDGNTALHRDIYPSVSLQIQKNFAKSKWRQAFNAAAVVHHMRKLHMNLHSPSVRQEVENRPPVSPAPEVSRPDSHDSSITEAPILDPSTPLPALTRLPCSHSSRPSAPSGGRSLNCLVNGSLRISSSLVPMQQGPLATGPCGCCSSCLNIGNKGKSSYCSEPTLFRKANKKQNFKSEVMVPVKAGGSTHCRGGQTGVCLVM</sequence>
<proteinExistence type="evidence at protein level"/>
<name>KCC1G_MOUSE</name>
<feature type="chain" id="PRO_0000086085" description="Calcium/calmodulin-dependent protein kinase type 1G">
    <location>
        <begin position="1"/>
        <end position="477"/>
    </location>
</feature>
<feature type="domain" description="Protein kinase" evidence="2">
    <location>
        <begin position="23"/>
        <end position="277"/>
    </location>
</feature>
<feature type="region of interest" description="Autoinhibitory domain" evidence="1">
    <location>
        <begin position="277"/>
        <end position="317"/>
    </location>
</feature>
<feature type="region of interest" description="Calmodulin-binding" evidence="1">
    <location>
        <begin position="297"/>
        <end position="318"/>
    </location>
</feature>
<feature type="region of interest" description="Disordered" evidence="4">
    <location>
        <begin position="326"/>
        <end position="388"/>
    </location>
</feature>
<feature type="compositionally biased region" description="Low complexity" evidence="4">
    <location>
        <begin position="376"/>
        <end position="388"/>
    </location>
</feature>
<feature type="active site" description="Proton acceptor" evidence="2 3">
    <location>
        <position position="143"/>
    </location>
</feature>
<feature type="binding site" evidence="2">
    <location>
        <begin position="29"/>
        <end position="37"/>
    </location>
    <ligand>
        <name>ATP</name>
        <dbReference type="ChEBI" id="CHEBI:30616"/>
    </ligand>
</feature>
<feature type="binding site" evidence="2">
    <location>
        <position position="52"/>
    </location>
    <ligand>
        <name>ATP</name>
        <dbReference type="ChEBI" id="CHEBI:30616"/>
    </ligand>
</feature>
<feature type="mutagenesis site" description="Loss of association to membranes." evidence="5">
    <original>C</original>
    <variation>S</variation>
    <location>
        <position position="474"/>
    </location>
</feature>
<evidence type="ECO:0000250" key="1"/>
<evidence type="ECO:0000255" key="2">
    <source>
        <dbReference type="PROSITE-ProRule" id="PRU00159"/>
    </source>
</evidence>
<evidence type="ECO:0000255" key="3">
    <source>
        <dbReference type="PROSITE-ProRule" id="PRU10027"/>
    </source>
</evidence>
<evidence type="ECO:0000256" key="4">
    <source>
        <dbReference type="SAM" id="MobiDB-lite"/>
    </source>
</evidence>
<evidence type="ECO:0000269" key="5">
    <source>
    </source>
</evidence>
<evidence type="ECO:0000305" key="6"/>
<organism>
    <name type="scientific">Mus musculus</name>
    <name type="common">Mouse</name>
    <dbReference type="NCBI Taxonomy" id="10090"/>
    <lineage>
        <taxon>Eukaryota</taxon>
        <taxon>Metazoa</taxon>
        <taxon>Chordata</taxon>
        <taxon>Craniata</taxon>
        <taxon>Vertebrata</taxon>
        <taxon>Euteleostomi</taxon>
        <taxon>Mammalia</taxon>
        <taxon>Eutheria</taxon>
        <taxon>Euarchontoglires</taxon>
        <taxon>Glires</taxon>
        <taxon>Rodentia</taxon>
        <taxon>Myomorpha</taxon>
        <taxon>Muroidea</taxon>
        <taxon>Muridae</taxon>
        <taxon>Murinae</taxon>
        <taxon>Mus</taxon>
        <taxon>Mus</taxon>
    </lineage>
</organism>
<comment type="function">
    <text>Calcium/calmodulin-dependent protein kinase belonging to a proposed calcium-triggered signaling cascade. In vitro phosphorylates transcription factor CREB1.</text>
</comment>
<comment type="catalytic activity">
    <reaction evidence="5">
        <text>L-seryl-[protein] + ATP = O-phospho-L-seryl-[protein] + ADP + H(+)</text>
        <dbReference type="Rhea" id="RHEA:17989"/>
        <dbReference type="Rhea" id="RHEA-COMP:9863"/>
        <dbReference type="Rhea" id="RHEA-COMP:11604"/>
        <dbReference type="ChEBI" id="CHEBI:15378"/>
        <dbReference type="ChEBI" id="CHEBI:29999"/>
        <dbReference type="ChEBI" id="CHEBI:30616"/>
        <dbReference type="ChEBI" id="CHEBI:83421"/>
        <dbReference type="ChEBI" id="CHEBI:456216"/>
        <dbReference type="EC" id="2.7.11.17"/>
    </reaction>
</comment>
<comment type="catalytic activity">
    <reaction evidence="5">
        <text>L-threonyl-[protein] + ATP = O-phospho-L-threonyl-[protein] + ADP + H(+)</text>
        <dbReference type="Rhea" id="RHEA:46608"/>
        <dbReference type="Rhea" id="RHEA-COMP:11060"/>
        <dbReference type="Rhea" id="RHEA-COMP:11605"/>
        <dbReference type="ChEBI" id="CHEBI:15378"/>
        <dbReference type="ChEBI" id="CHEBI:30013"/>
        <dbReference type="ChEBI" id="CHEBI:30616"/>
        <dbReference type="ChEBI" id="CHEBI:61977"/>
        <dbReference type="ChEBI" id="CHEBI:456216"/>
        <dbReference type="EC" id="2.7.11.17"/>
    </reaction>
</comment>
<comment type="activity regulation">
    <text evidence="5">Activated by Ca(2+)/calmodulin. Binding of calmodulin is thought to result in a conformational change and leads to activation through phosphorylation by CAMKK1.</text>
</comment>
<comment type="subcellular location">
    <subcellularLocation>
        <location evidence="5">Cytoplasm</location>
    </subcellularLocation>
    <subcellularLocation>
        <location evidence="5">Golgi apparatus membrane</location>
        <topology evidence="5">Peripheral membrane protein</topology>
    </subcellularLocation>
    <subcellularLocation>
        <location evidence="5">Cell membrane</location>
        <topology evidence="5">Peripheral membrane protein</topology>
    </subcellularLocation>
</comment>
<comment type="tissue specificity">
    <text evidence="5">Highly expressed in brain, in neuronal cell bodies of the central nucleus of amygdala and ventromedial hypothalamic nucleus. Also detected in heart, testis, and kidney.</text>
</comment>
<comment type="developmental stage">
    <text evidence="5">Expression starts at 11 dpc in parallel with the onset of development of the central nervous system.</text>
</comment>
<comment type="domain">
    <text evidence="1">The autoinhibitory domain overlaps with the calmodulin binding region and interacts in the inactive folded state with the catalytic domain as a pseudosubstrate.</text>
</comment>
<comment type="PTM">
    <text evidence="5">May be prenylated on Cys-474.</text>
</comment>
<comment type="similarity">
    <text evidence="6">Belongs to the protein kinase superfamily. CAMK Ser/Thr protein kinase family. CaMK subfamily.</text>
</comment>